<feature type="chain" id="PRO_0000303417" description="tRNA N6-adenosine threonylcarbamoyltransferase">
    <location>
        <begin position="1"/>
        <end position="347"/>
    </location>
</feature>
<feature type="binding site" evidence="1">
    <location>
        <position position="111"/>
    </location>
    <ligand>
        <name>Fe cation</name>
        <dbReference type="ChEBI" id="CHEBI:24875"/>
    </ligand>
</feature>
<feature type="binding site" evidence="1">
    <location>
        <position position="115"/>
    </location>
    <ligand>
        <name>Fe cation</name>
        <dbReference type="ChEBI" id="CHEBI:24875"/>
    </ligand>
</feature>
<feature type="binding site" evidence="1">
    <location>
        <begin position="133"/>
        <end position="137"/>
    </location>
    <ligand>
        <name>substrate</name>
    </ligand>
</feature>
<feature type="binding site" evidence="1">
    <location>
        <position position="166"/>
    </location>
    <ligand>
        <name>substrate</name>
    </ligand>
</feature>
<feature type="binding site" evidence="1">
    <location>
        <position position="179"/>
    </location>
    <ligand>
        <name>substrate</name>
    </ligand>
</feature>
<feature type="binding site" evidence="1">
    <location>
        <position position="278"/>
    </location>
    <ligand>
        <name>substrate</name>
    </ligand>
</feature>
<feature type="binding site" evidence="1">
    <location>
        <position position="306"/>
    </location>
    <ligand>
        <name>Fe cation</name>
        <dbReference type="ChEBI" id="CHEBI:24875"/>
    </ligand>
</feature>
<dbReference type="EC" id="2.3.1.234" evidence="1"/>
<dbReference type="EMBL" id="AP007255">
    <property type="protein sequence ID" value="BAE53223.1"/>
    <property type="molecule type" value="Genomic_DNA"/>
</dbReference>
<dbReference type="RefSeq" id="WP_011386764.1">
    <property type="nucleotide sequence ID" value="NC_007626.1"/>
</dbReference>
<dbReference type="SMR" id="Q2VYV2"/>
<dbReference type="STRING" id="342108.amb4419"/>
<dbReference type="KEGG" id="mag:amb4419"/>
<dbReference type="HOGENOM" id="CLU_023208_0_2_5"/>
<dbReference type="OrthoDB" id="9806197at2"/>
<dbReference type="Proteomes" id="UP000007058">
    <property type="component" value="Chromosome"/>
</dbReference>
<dbReference type="GO" id="GO:0005737">
    <property type="term" value="C:cytoplasm"/>
    <property type="evidence" value="ECO:0007669"/>
    <property type="project" value="UniProtKB-SubCell"/>
</dbReference>
<dbReference type="GO" id="GO:0005506">
    <property type="term" value="F:iron ion binding"/>
    <property type="evidence" value="ECO:0007669"/>
    <property type="project" value="UniProtKB-UniRule"/>
</dbReference>
<dbReference type="GO" id="GO:0061711">
    <property type="term" value="F:N(6)-L-threonylcarbamoyladenine synthase activity"/>
    <property type="evidence" value="ECO:0007669"/>
    <property type="project" value="UniProtKB-EC"/>
</dbReference>
<dbReference type="GO" id="GO:0002949">
    <property type="term" value="P:tRNA threonylcarbamoyladenosine modification"/>
    <property type="evidence" value="ECO:0007669"/>
    <property type="project" value="UniProtKB-UniRule"/>
</dbReference>
<dbReference type="CDD" id="cd24133">
    <property type="entry name" value="ASKHA_NBD_TsaD_bac"/>
    <property type="match status" value="1"/>
</dbReference>
<dbReference type="FunFam" id="3.30.420.40:FF:000012">
    <property type="entry name" value="tRNA N6-adenosine threonylcarbamoyltransferase"/>
    <property type="match status" value="1"/>
</dbReference>
<dbReference type="Gene3D" id="3.30.420.40">
    <property type="match status" value="2"/>
</dbReference>
<dbReference type="HAMAP" id="MF_01445">
    <property type="entry name" value="TsaD"/>
    <property type="match status" value="1"/>
</dbReference>
<dbReference type="InterPro" id="IPR043129">
    <property type="entry name" value="ATPase_NBD"/>
</dbReference>
<dbReference type="InterPro" id="IPR000905">
    <property type="entry name" value="Gcp-like_dom"/>
</dbReference>
<dbReference type="InterPro" id="IPR017861">
    <property type="entry name" value="KAE1/TsaD"/>
</dbReference>
<dbReference type="InterPro" id="IPR022450">
    <property type="entry name" value="TsaD"/>
</dbReference>
<dbReference type="NCBIfam" id="TIGR00329">
    <property type="entry name" value="gcp_kae1"/>
    <property type="match status" value="1"/>
</dbReference>
<dbReference type="NCBIfam" id="TIGR03723">
    <property type="entry name" value="T6A_TsaD_YgjD"/>
    <property type="match status" value="1"/>
</dbReference>
<dbReference type="PANTHER" id="PTHR11735">
    <property type="entry name" value="TRNA N6-ADENOSINE THREONYLCARBAMOYLTRANSFERASE"/>
    <property type="match status" value="1"/>
</dbReference>
<dbReference type="PANTHER" id="PTHR11735:SF6">
    <property type="entry name" value="TRNA N6-ADENOSINE THREONYLCARBAMOYLTRANSFERASE, MITOCHONDRIAL"/>
    <property type="match status" value="1"/>
</dbReference>
<dbReference type="Pfam" id="PF00814">
    <property type="entry name" value="TsaD"/>
    <property type="match status" value="1"/>
</dbReference>
<dbReference type="PRINTS" id="PR00789">
    <property type="entry name" value="OSIALOPTASE"/>
</dbReference>
<dbReference type="SUPFAM" id="SSF53067">
    <property type="entry name" value="Actin-like ATPase domain"/>
    <property type="match status" value="2"/>
</dbReference>
<keyword id="KW-0012">Acyltransferase</keyword>
<keyword id="KW-0963">Cytoplasm</keyword>
<keyword id="KW-0408">Iron</keyword>
<keyword id="KW-0479">Metal-binding</keyword>
<keyword id="KW-0808">Transferase</keyword>
<keyword id="KW-0819">tRNA processing</keyword>
<gene>
    <name evidence="1" type="primary">tsaD</name>
    <name type="synonym">gcp</name>
    <name type="ordered locus">amb4419</name>
</gene>
<protein>
    <recommendedName>
        <fullName evidence="1">tRNA N6-adenosine threonylcarbamoyltransferase</fullName>
        <ecNumber evidence="1">2.3.1.234</ecNumber>
    </recommendedName>
    <alternativeName>
        <fullName evidence="1">N6-L-threonylcarbamoyladenine synthase</fullName>
        <shortName evidence="1">t(6)A synthase</shortName>
    </alternativeName>
    <alternativeName>
        <fullName evidence="1">t(6)A37 threonylcarbamoyladenosine biosynthesis protein TsaD</fullName>
    </alternativeName>
    <alternativeName>
        <fullName evidence="1">tRNA threonylcarbamoyladenosine biosynthesis protein TsaD</fullName>
    </alternativeName>
</protein>
<evidence type="ECO:0000255" key="1">
    <source>
        <dbReference type="HAMAP-Rule" id="MF_01445"/>
    </source>
</evidence>
<accession>Q2VYV2</accession>
<name>TSAD_PARM1</name>
<sequence>MLVLGIESSCDETAAAVVNDRREILGEVVLSQLDEHRPFGGVVPEIAARSHLAHMDKLVAEAMRRAGVGFADLDAVAATGGPGLIGGVIVGVMTGKAIALAAGKPFLAVNHLEGHALTPRLTHDIAFPYLLLLASGGHCQLLAVEGVGRYTRLGTTIDDAAGEAFDKVAKMAGLGYPGGPAVEAAAQGGDPARFTLPRPMKGKPGCDFSFSGLKNAARLLIESLPQPLSAADQADVARAFQDAVADAMADRVRRGVREMKSRWPQTQHLVVAGGVAANTALRQVLVRIGNETGLEFLAPPLKLCTDNAAMIAWAGLERLRLGQSDDLTFAPRPRWPLDPTARKGAKA</sequence>
<proteinExistence type="inferred from homology"/>
<organism>
    <name type="scientific">Paramagnetospirillum magneticum (strain ATCC 700264 / AMB-1)</name>
    <name type="common">Magnetospirillum magneticum</name>
    <dbReference type="NCBI Taxonomy" id="342108"/>
    <lineage>
        <taxon>Bacteria</taxon>
        <taxon>Pseudomonadati</taxon>
        <taxon>Pseudomonadota</taxon>
        <taxon>Alphaproteobacteria</taxon>
        <taxon>Rhodospirillales</taxon>
        <taxon>Magnetospirillaceae</taxon>
        <taxon>Paramagnetospirillum</taxon>
    </lineage>
</organism>
<comment type="function">
    <text evidence="1">Required for the formation of a threonylcarbamoyl group on adenosine at position 37 (t(6)A37) in tRNAs that read codons beginning with adenine. Is involved in the transfer of the threonylcarbamoyl moiety of threonylcarbamoyl-AMP (TC-AMP) to the N6 group of A37, together with TsaE and TsaB. TsaD likely plays a direct catalytic role in this reaction.</text>
</comment>
<comment type="catalytic activity">
    <reaction evidence="1">
        <text>L-threonylcarbamoyladenylate + adenosine(37) in tRNA = N(6)-L-threonylcarbamoyladenosine(37) in tRNA + AMP + H(+)</text>
        <dbReference type="Rhea" id="RHEA:37059"/>
        <dbReference type="Rhea" id="RHEA-COMP:10162"/>
        <dbReference type="Rhea" id="RHEA-COMP:10163"/>
        <dbReference type="ChEBI" id="CHEBI:15378"/>
        <dbReference type="ChEBI" id="CHEBI:73682"/>
        <dbReference type="ChEBI" id="CHEBI:74411"/>
        <dbReference type="ChEBI" id="CHEBI:74418"/>
        <dbReference type="ChEBI" id="CHEBI:456215"/>
        <dbReference type="EC" id="2.3.1.234"/>
    </reaction>
</comment>
<comment type="cofactor">
    <cofactor evidence="1">
        <name>Fe(2+)</name>
        <dbReference type="ChEBI" id="CHEBI:29033"/>
    </cofactor>
    <text evidence="1">Binds 1 Fe(2+) ion per subunit.</text>
</comment>
<comment type="subcellular location">
    <subcellularLocation>
        <location evidence="1">Cytoplasm</location>
    </subcellularLocation>
</comment>
<comment type="similarity">
    <text evidence="1">Belongs to the KAE1 / TsaD family.</text>
</comment>
<reference key="1">
    <citation type="journal article" date="2005" name="DNA Res.">
        <title>Complete genome sequence of the facultative anaerobic magnetotactic bacterium Magnetospirillum sp. strain AMB-1.</title>
        <authorList>
            <person name="Matsunaga T."/>
            <person name="Okamura Y."/>
            <person name="Fukuda Y."/>
            <person name="Wahyudi A.T."/>
            <person name="Murase Y."/>
            <person name="Takeyama H."/>
        </authorList>
    </citation>
    <scope>NUCLEOTIDE SEQUENCE [LARGE SCALE GENOMIC DNA]</scope>
    <source>
        <strain>ATCC 700264 / AMB-1</strain>
    </source>
</reference>